<gene>
    <name evidence="1" type="primary">leuS</name>
    <name type="ordered locus">STY0699</name>
    <name type="ordered locus">t2219</name>
</gene>
<feature type="chain" id="PRO_0000152077" description="Leucine--tRNA ligase">
    <location>
        <begin position="1"/>
        <end position="860"/>
    </location>
</feature>
<feature type="short sequence motif" description="'HIGH' region">
    <location>
        <begin position="42"/>
        <end position="52"/>
    </location>
</feature>
<feature type="short sequence motif" description="'KMSKS' region">
    <location>
        <begin position="619"/>
        <end position="623"/>
    </location>
</feature>
<feature type="binding site" evidence="1">
    <location>
        <position position="622"/>
    </location>
    <ligand>
        <name>ATP</name>
        <dbReference type="ChEBI" id="CHEBI:30616"/>
    </ligand>
</feature>
<comment type="catalytic activity">
    <reaction evidence="1">
        <text>tRNA(Leu) + L-leucine + ATP = L-leucyl-tRNA(Leu) + AMP + diphosphate</text>
        <dbReference type="Rhea" id="RHEA:11688"/>
        <dbReference type="Rhea" id="RHEA-COMP:9613"/>
        <dbReference type="Rhea" id="RHEA-COMP:9622"/>
        <dbReference type="ChEBI" id="CHEBI:30616"/>
        <dbReference type="ChEBI" id="CHEBI:33019"/>
        <dbReference type="ChEBI" id="CHEBI:57427"/>
        <dbReference type="ChEBI" id="CHEBI:78442"/>
        <dbReference type="ChEBI" id="CHEBI:78494"/>
        <dbReference type="ChEBI" id="CHEBI:456215"/>
        <dbReference type="EC" id="6.1.1.4"/>
    </reaction>
</comment>
<comment type="subcellular location">
    <subcellularLocation>
        <location evidence="1">Cytoplasm</location>
    </subcellularLocation>
</comment>
<comment type="similarity">
    <text evidence="1">Belongs to the class-I aminoacyl-tRNA synthetase family.</text>
</comment>
<keyword id="KW-0030">Aminoacyl-tRNA synthetase</keyword>
<keyword id="KW-0067">ATP-binding</keyword>
<keyword id="KW-0963">Cytoplasm</keyword>
<keyword id="KW-0436">Ligase</keyword>
<keyword id="KW-0547">Nucleotide-binding</keyword>
<keyword id="KW-0648">Protein biosynthesis</keyword>
<reference key="1">
    <citation type="journal article" date="2001" name="Nature">
        <title>Complete genome sequence of a multiple drug resistant Salmonella enterica serovar Typhi CT18.</title>
        <authorList>
            <person name="Parkhill J."/>
            <person name="Dougan G."/>
            <person name="James K.D."/>
            <person name="Thomson N.R."/>
            <person name="Pickard D."/>
            <person name="Wain J."/>
            <person name="Churcher C.M."/>
            <person name="Mungall K.L."/>
            <person name="Bentley S.D."/>
            <person name="Holden M.T.G."/>
            <person name="Sebaihia M."/>
            <person name="Baker S."/>
            <person name="Basham D."/>
            <person name="Brooks K."/>
            <person name="Chillingworth T."/>
            <person name="Connerton P."/>
            <person name="Cronin A."/>
            <person name="Davis P."/>
            <person name="Davies R.M."/>
            <person name="Dowd L."/>
            <person name="White N."/>
            <person name="Farrar J."/>
            <person name="Feltwell T."/>
            <person name="Hamlin N."/>
            <person name="Haque A."/>
            <person name="Hien T.T."/>
            <person name="Holroyd S."/>
            <person name="Jagels K."/>
            <person name="Krogh A."/>
            <person name="Larsen T.S."/>
            <person name="Leather S."/>
            <person name="Moule S."/>
            <person name="O'Gaora P."/>
            <person name="Parry C."/>
            <person name="Quail M.A."/>
            <person name="Rutherford K.M."/>
            <person name="Simmonds M."/>
            <person name="Skelton J."/>
            <person name="Stevens K."/>
            <person name="Whitehead S."/>
            <person name="Barrell B.G."/>
        </authorList>
    </citation>
    <scope>NUCLEOTIDE SEQUENCE [LARGE SCALE GENOMIC DNA]</scope>
    <source>
        <strain>CT18</strain>
    </source>
</reference>
<reference key="2">
    <citation type="journal article" date="2003" name="J. Bacteriol.">
        <title>Comparative genomics of Salmonella enterica serovar Typhi strains Ty2 and CT18.</title>
        <authorList>
            <person name="Deng W."/>
            <person name="Liou S.-R."/>
            <person name="Plunkett G. III"/>
            <person name="Mayhew G.F."/>
            <person name="Rose D.J."/>
            <person name="Burland V."/>
            <person name="Kodoyianni V."/>
            <person name="Schwartz D.C."/>
            <person name="Blattner F.R."/>
        </authorList>
    </citation>
    <scope>NUCLEOTIDE SEQUENCE [LARGE SCALE GENOMIC DNA]</scope>
    <source>
        <strain>ATCC 700931 / Ty2</strain>
    </source>
</reference>
<organism>
    <name type="scientific">Salmonella typhi</name>
    <dbReference type="NCBI Taxonomy" id="90370"/>
    <lineage>
        <taxon>Bacteria</taxon>
        <taxon>Pseudomonadati</taxon>
        <taxon>Pseudomonadota</taxon>
        <taxon>Gammaproteobacteria</taxon>
        <taxon>Enterobacterales</taxon>
        <taxon>Enterobacteriaceae</taxon>
        <taxon>Salmonella</taxon>
    </lineage>
</organism>
<protein>
    <recommendedName>
        <fullName evidence="1">Leucine--tRNA ligase</fullName>
        <ecNumber evidence="1">6.1.1.4</ecNumber>
    </recommendedName>
    <alternativeName>
        <fullName evidence="1">Leucyl-tRNA synthetase</fullName>
        <shortName evidence="1">LeuRS</shortName>
    </alternativeName>
</protein>
<evidence type="ECO:0000255" key="1">
    <source>
        <dbReference type="HAMAP-Rule" id="MF_00049"/>
    </source>
</evidence>
<proteinExistence type="inferred from homology"/>
<name>SYL_SALTI</name>
<accession>Q8Z8H5</accession>
<dbReference type="EC" id="6.1.1.4" evidence="1"/>
<dbReference type="EMBL" id="AL513382">
    <property type="protein sequence ID" value="CAD05125.1"/>
    <property type="molecule type" value="Genomic_DNA"/>
</dbReference>
<dbReference type="EMBL" id="AE014613">
    <property type="protein sequence ID" value="AAO69822.1"/>
    <property type="molecule type" value="Genomic_DNA"/>
</dbReference>
<dbReference type="RefSeq" id="NP_455224.1">
    <property type="nucleotide sequence ID" value="NC_003198.1"/>
</dbReference>
<dbReference type="RefSeq" id="WP_001157907.1">
    <property type="nucleotide sequence ID" value="NZ_WSUR01000015.1"/>
</dbReference>
<dbReference type="SMR" id="Q8Z8H5"/>
<dbReference type="STRING" id="220341.gene:17584706"/>
<dbReference type="KEGG" id="stt:t2219"/>
<dbReference type="KEGG" id="sty:STY0699"/>
<dbReference type="PATRIC" id="fig|220341.7.peg.703"/>
<dbReference type="eggNOG" id="COG0495">
    <property type="taxonomic scope" value="Bacteria"/>
</dbReference>
<dbReference type="HOGENOM" id="CLU_004427_0_0_6"/>
<dbReference type="OMA" id="GIEHACM"/>
<dbReference type="OrthoDB" id="9810365at2"/>
<dbReference type="Proteomes" id="UP000000541">
    <property type="component" value="Chromosome"/>
</dbReference>
<dbReference type="Proteomes" id="UP000002670">
    <property type="component" value="Chromosome"/>
</dbReference>
<dbReference type="GO" id="GO:0005829">
    <property type="term" value="C:cytosol"/>
    <property type="evidence" value="ECO:0007669"/>
    <property type="project" value="TreeGrafter"/>
</dbReference>
<dbReference type="GO" id="GO:0002161">
    <property type="term" value="F:aminoacyl-tRNA deacylase activity"/>
    <property type="evidence" value="ECO:0007669"/>
    <property type="project" value="InterPro"/>
</dbReference>
<dbReference type="GO" id="GO:0005524">
    <property type="term" value="F:ATP binding"/>
    <property type="evidence" value="ECO:0007669"/>
    <property type="project" value="UniProtKB-UniRule"/>
</dbReference>
<dbReference type="GO" id="GO:0004823">
    <property type="term" value="F:leucine-tRNA ligase activity"/>
    <property type="evidence" value="ECO:0007669"/>
    <property type="project" value="UniProtKB-UniRule"/>
</dbReference>
<dbReference type="GO" id="GO:0006429">
    <property type="term" value="P:leucyl-tRNA aminoacylation"/>
    <property type="evidence" value="ECO:0007669"/>
    <property type="project" value="UniProtKB-UniRule"/>
</dbReference>
<dbReference type="CDD" id="cd07958">
    <property type="entry name" value="Anticodon_Ia_Leu_BEm"/>
    <property type="match status" value="1"/>
</dbReference>
<dbReference type="CDD" id="cd00812">
    <property type="entry name" value="LeuRS_core"/>
    <property type="match status" value="1"/>
</dbReference>
<dbReference type="FunFam" id="1.10.730.10:FF:000002">
    <property type="entry name" value="Leucine--tRNA ligase"/>
    <property type="match status" value="2"/>
</dbReference>
<dbReference type="FunFam" id="2.20.28.290:FF:000001">
    <property type="entry name" value="Leucine--tRNA ligase"/>
    <property type="match status" value="1"/>
</dbReference>
<dbReference type="FunFam" id="3.10.20.590:FF:000001">
    <property type="entry name" value="Leucine--tRNA ligase"/>
    <property type="match status" value="1"/>
</dbReference>
<dbReference type="FunFam" id="3.40.50.620:FF:000003">
    <property type="entry name" value="Leucine--tRNA ligase"/>
    <property type="match status" value="1"/>
</dbReference>
<dbReference type="FunFam" id="3.40.50.620:FF:000124">
    <property type="entry name" value="Leucine--tRNA ligase"/>
    <property type="match status" value="1"/>
</dbReference>
<dbReference type="FunFam" id="3.90.740.10:FF:000012">
    <property type="entry name" value="Leucine--tRNA ligase"/>
    <property type="match status" value="1"/>
</dbReference>
<dbReference type="Gene3D" id="2.20.28.290">
    <property type="match status" value="1"/>
</dbReference>
<dbReference type="Gene3D" id="3.10.20.590">
    <property type="match status" value="1"/>
</dbReference>
<dbReference type="Gene3D" id="3.40.50.620">
    <property type="entry name" value="HUPs"/>
    <property type="match status" value="2"/>
</dbReference>
<dbReference type="Gene3D" id="1.10.730.10">
    <property type="entry name" value="Isoleucyl-tRNA Synthetase, Domain 1"/>
    <property type="match status" value="2"/>
</dbReference>
<dbReference type="HAMAP" id="MF_00049_B">
    <property type="entry name" value="Leu_tRNA_synth_B"/>
    <property type="match status" value="1"/>
</dbReference>
<dbReference type="InterPro" id="IPR001412">
    <property type="entry name" value="aa-tRNA-synth_I_CS"/>
</dbReference>
<dbReference type="InterPro" id="IPR002300">
    <property type="entry name" value="aa-tRNA-synth_Ia"/>
</dbReference>
<dbReference type="InterPro" id="IPR002302">
    <property type="entry name" value="Leu-tRNA-ligase"/>
</dbReference>
<dbReference type="InterPro" id="IPR025709">
    <property type="entry name" value="Leu_tRNA-synth_edit"/>
</dbReference>
<dbReference type="InterPro" id="IPR013155">
    <property type="entry name" value="M/V/L/I-tRNA-synth_anticd-bd"/>
</dbReference>
<dbReference type="InterPro" id="IPR015413">
    <property type="entry name" value="Methionyl/Leucyl_tRNA_Synth"/>
</dbReference>
<dbReference type="InterPro" id="IPR014729">
    <property type="entry name" value="Rossmann-like_a/b/a_fold"/>
</dbReference>
<dbReference type="InterPro" id="IPR009080">
    <property type="entry name" value="tRNAsynth_Ia_anticodon-bd"/>
</dbReference>
<dbReference type="InterPro" id="IPR009008">
    <property type="entry name" value="Val/Leu/Ile-tRNA-synth_edit"/>
</dbReference>
<dbReference type="NCBIfam" id="TIGR00396">
    <property type="entry name" value="leuS_bact"/>
    <property type="match status" value="1"/>
</dbReference>
<dbReference type="PANTHER" id="PTHR43740:SF2">
    <property type="entry name" value="LEUCINE--TRNA LIGASE, MITOCHONDRIAL"/>
    <property type="match status" value="1"/>
</dbReference>
<dbReference type="PANTHER" id="PTHR43740">
    <property type="entry name" value="LEUCYL-TRNA SYNTHETASE"/>
    <property type="match status" value="1"/>
</dbReference>
<dbReference type="Pfam" id="PF08264">
    <property type="entry name" value="Anticodon_1"/>
    <property type="match status" value="1"/>
</dbReference>
<dbReference type="Pfam" id="PF00133">
    <property type="entry name" value="tRNA-synt_1"/>
    <property type="match status" value="2"/>
</dbReference>
<dbReference type="Pfam" id="PF13603">
    <property type="entry name" value="tRNA-synt_1_2"/>
    <property type="match status" value="1"/>
</dbReference>
<dbReference type="Pfam" id="PF09334">
    <property type="entry name" value="tRNA-synt_1g"/>
    <property type="match status" value="1"/>
</dbReference>
<dbReference type="PRINTS" id="PR00985">
    <property type="entry name" value="TRNASYNTHLEU"/>
</dbReference>
<dbReference type="SUPFAM" id="SSF47323">
    <property type="entry name" value="Anticodon-binding domain of a subclass of class I aminoacyl-tRNA synthetases"/>
    <property type="match status" value="1"/>
</dbReference>
<dbReference type="SUPFAM" id="SSF52374">
    <property type="entry name" value="Nucleotidylyl transferase"/>
    <property type="match status" value="1"/>
</dbReference>
<dbReference type="SUPFAM" id="SSF50677">
    <property type="entry name" value="ValRS/IleRS/LeuRS editing domain"/>
    <property type="match status" value="1"/>
</dbReference>
<dbReference type="PROSITE" id="PS00178">
    <property type="entry name" value="AA_TRNA_LIGASE_I"/>
    <property type="match status" value="1"/>
</dbReference>
<sequence length="860" mass="96940">MQEQYRPEEIESKVQLHWDEKRTFEVTEDESKEKYYCLSMLPYPSGRLHMGHVRNYTIGDVVARYQHMLGKNVLQPIGWDAFGLPAEGAAVKNNTAPAPWTYDNIAYMKNQLKTLGFGYDWSREIATCTPEYYRWEQKFFTELYKKGLVYKKTSAVNWCPNDQTVLANEQVIDGCCWRCDTKVERKEIPQWFIKITAYADELLRDLDKLDHWPDTVKTMQRNWIGRSEGVEITFDVKGYDNTLTVYTTRPDTFMGATYLAVAAGHPLAQKAAANNAELAAFIDECRNTKVAEAEMATMEKKGVDTGYKAIHPLTGEEIPVWAANFVLMEYGTGAVMAVPGHDQRDYEFASKYGLTIKPVILAADGSEPDLSEQALTEKGVLFNSGEFDGLAFEAAFNAIADKLAEKGVGERKVNYRLRDWGVSRQRYWGAPIPMVTLEDGTVLPTPEDQLPVILPEDVVMDGITSPIKADPEWAKTTVNGMPALRETDTFDTFMESSWYYARYTCPQYQEGMLDSKAANYWLPVDIYIGGIEHAIMHLLYFRFFHKLMRDAGMVTSDEPAKQLLCQGMVLADAFYYVGENGERNWVSPVDAIVERDEKGRIVKAKDAAGHELVYTGMSKMSKSKNNGIDPQVMVERYGADTVRLFMMFASPADMTLEWQESGVEGANRFIKRVWKLVYEHTAKGPVAALNVDALSEDQKALRRDVHKTIAKVTDDIGRRQTFNTAIAAIMELMNKLAKAPQEGEQDRALLQEALQAVVRMLNPFTPHVCFTLWQELGGEGDIDNAPWPVADEQAMVENTTLVVVQVNGKVRGKITVAVDATEEQVRERAGQEHLVAKYLDGVTVRKVIYVPGKLLNLVVG</sequence>